<proteinExistence type="evidence at protein level"/>
<evidence type="ECO:0000250" key="1">
    <source>
        <dbReference type="UniProtKB" id="Q9FGC5"/>
    </source>
</evidence>
<evidence type="ECO:0000255" key="2">
    <source>
        <dbReference type="PROSITE-ProRule" id="PRU01088"/>
    </source>
</evidence>
<evidence type="ECO:0000256" key="3">
    <source>
        <dbReference type="SAM" id="MobiDB-lite"/>
    </source>
</evidence>
<evidence type="ECO:0000269" key="4">
    <source>
    </source>
</evidence>
<evidence type="ECO:0000269" key="5">
    <source>
    </source>
</evidence>
<evidence type="ECO:0000305" key="6"/>
<organism>
    <name type="scientific">Arabidopsis thaliana</name>
    <name type="common">Mouse-ear cress</name>
    <dbReference type="NCBI Taxonomy" id="3702"/>
    <lineage>
        <taxon>Eukaryota</taxon>
        <taxon>Viridiplantae</taxon>
        <taxon>Streptophyta</taxon>
        <taxon>Embryophyta</taxon>
        <taxon>Tracheophyta</taxon>
        <taxon>Spermatophyta</taxon>
        <taxon>Magnoliopsida</taxon>
        <taxon>eudicotyledons</taxon>
        <taxon>Gunneridae</taxon>
        <taxon>Pentapetalae</taxon>
        <taxon>rosids</taxon>
        <taxon>malvids</taxon>
        <taxon>Brassicales</taxon>
        <taxon>Brassicaceae</taxon>
        <taxon>Camelineae</taxon>
        <taxon>Arabidopsis</taxon>
    </lineage>
</organism>
<dbReference type="EMBL" id="AP000373">
    <property type="protein sequence ID" value="BAB01142.1"/>
    <property type="molecule type" value="Genomic_DNA"/>
</dbReference>
<dbReference type="EMBL" id="AC001645">
    <property type="protein sequence ID" value="AAB63634.1"/>
    <property type="molecule type" value="Genomic_DNA"/>
</dbReference>
<dbReference type="EMBL" id="CP002686">
    <property type="protein sequence ID" value="AEE75813.1"/>
    <property type="molecule type" value="Genomic_DNA"/>
</dbReference>
<dbReference type="EMBL" id="CP002686">
    <property type="protein sequence ID" value="AEE75814.1"/>
    <property type="molecule type" value="Genomic_DNA"/>
</dbReference>
<dbReference type="EMBL" id="AY084838">
    <property type="protein sequence ID" value="AAM61403.1"/>
    <property type="molecule type" value="mRNA"/>
</dbReference>
<dbReference type="EMBL" id="BT002861">
    <property type="protein sequence ID" value="AAO22678.1"/>
    <property type="molecule type" value="mRNA"/>
</dbReference>
<dbReference type="EMBL" id="BT004393">
    <property type="protein sequence ID" value="AAO42387.1"/>
    <property type="molecule type" value="mRNA"/>
</dbReference>
<dbReference type="RefSeq" id="NP_188264.1">
    <property type="nucleotide sequence ID" value="NM_112514.3"/>
</dbReference>
<dbReference type="RefSeq" id="NP_850595.1">
    <property type="nucleotide sequence ID" value="NM_180264.3"/>
</dbReference>
<dbReference type="SMR" id="O04313"/>
<dbReference type="BioGRID" id="6225">
    <property type="interactions" value="1"/>
</dbReference>
<dbReference type="FunCoup" id="O04313">
    <property type="interactions" value="19"/>
</dbReference>
<dbReference type="STRING" id="3702.O04313"/>
<dbReference type="iPTMnet" id="O04313"/>
<dbReference type="PaxDb" id="3702-AT3G16430.2"/>
<dbReference type="ProteomicsDB" id="250661"/>
<dbReference type="DNASU" id="820891"/>
<dbReference type="EnsemblPlants" id="AT3G16430.1">
    <property type="protein sequence ID" value="AT3G16430.1"/>
    <property type="gene ID" value="AT3G16430"/>
</dbReference>
<dbReference type="EnsemblPlants" id="AT3G16430.2">
    <property type="protein sequence ID" value="AT3G16430.2"/>
    <property type="gene ID" value="AT3G16430"/>
</dbReference>
<dbReference type="GeneID" id="820891"/>
<dbReference type="Gramene" id="AT3G16430.1">
    <property type="protein sequence ID" value="AT3G16430.1"/>
    <property type="gene ID" value="AT3G16430"/>
</dbReference>
<dbReference type="Gramene" id="AT3G16430.2">
    <property type="protein sequence ID" value="AT3G16430.2"/>
    <property type="gene ID" value="AT3G16430"/>
</dbReference>
<dbReference type="KEGG" id="ath:AT3G16430"/>
<dbReference type="Araport" id="AT3G16430"/>
<dbReference type="TAIR" id="AT3G16430">
    <property type="gene designation" value="JAL31"/>
</dbReference>
<dbReference type="HOGENOM" id="CLU_019384_1_0_1"/>
<dbReference type="InParanoid" id="O04313"/>
<dbReference type="OMA" id="IDHPEEH"/>
<dbReference type="OrthoDB" id="4325201at2759"/>
<dbReference type="PhylomeDB" id="O04313"/>
<dbReference type="PRO" id="PR:O04313"/>
<dbReference type="Proteomes" id="UP000006548">
    <property type="component" value="Chromosome 3"/>
</dbReference>
<dbReference type="ExpressionAtlas" id="O04313">
    <property type="expression patterns" value="baseline and differential"/>
</dbReference>
<dbReference type="GO" id="GO:0005829">
    <property type="term" value="C:cytosol"/>
    <property type="evidence" value="ECO:0007005"/>
    <property type="project" value="TAIR"/>
</dbReference>
<dbReference type="GO" id="GO:0030246">
    <property type="term" value="F:carbohydrate binding"/>
    <property type="evidence" value="ECO:0007669"/>
    <property type="project" value="UniProtKB-KW"/>
</dbReference>
<dbReference type="GO" id="GO:0005507">
    <property type="term" value="F:copper ion binding"/>
    <property type="evidence" value="ECO:0007005"/>
    <property type="project" value="TAIR"/>
</dbReference>
<dbReference type="CDD" id="cd09612">
    <property type="entry name" value="Jacalin"/>
    <property type="match status" value="2"/>
</dbReference>
<dbReference type="FunFam" id="2.100.10.30:FF:000001">
    <property type="entry name" value="Jacalin-related lectin 33"/>
    <property type="match status" value="2"/>
</dbReference>
<dbReference type="Gene3D" id="2.100.10.30">
    <property type="entry name" value="Jacalin-like lectin domain"/>
    <property type="match status" value="2"/>
</dbReference>
<dbReference type="InterPro" id="IPR001229">
    <property type="entry name" value="Jacalin-like_lectin_dom"/>
</dbReference>
<dbReference type="InterPro" id="IPR033734">
    <property type="entry name" value="Jacalin-like_lectin_dom_plant"/>
</dbReference>
<dbReference type="InterPro" id="IPR036404">
    <property type="entry name" value="Jacalin-like_lectin_dom_sf"/>
</dbReference>
<dbReference type="PANTHER" id="PTHR47293">
    <property type="entry name" value="JACALIN-RELATED LECTIN 3"/>
    <property type="match status" value="1"/>
</dbReference>
<dbReference type="PANTHER" id="PTHR47293:SF71">
    <property type="entry name" value="PYK10-BINDING PROTEIN 1-RELATED"/>
    <property type="match status" value="1"/>
</dbReference>
<dbReference type="Pfam" id="PF01419">
    <property type="entry name" value="Jacalin"/>
    <property type="match status" value="2"/>
</dbReference>
<dbReference type="SMART" id="SM00915">
    <property type="entry name" value="Jacalin"/>
    <property type="match status" value="2"/>
</dbReference>
<dbReference type="SUPFAM" id="SSF51101">
    <property type="entry name" value="Mannose-binding lectins"/>
    <property type="match status" value="2"/>
</dbReference>
<dbReference type="PROSITE" id="PS51752">
    <property type="entry name" value="JACALIN_LECTIN"/>
    <property type="match status" value="2"/>
</dbReference>
<comment type="function">
    <text evidence="4 5">Polymerizer-type lectin that may facilitate the correct polymerization of BGLU23/PYK10 upon tissue damage. Activates BGLU21, BGLU22 and BGLU23.</text>
</comment>
<comment type="subunit">
    <text evidence="4">Component of the PYK10 complex, at least composed of PYK10/BGLU23, BGLU21, BGLU22, JAL22, JAL23, PBP1/JAL30, PBP2/JAL31, JAL32, JAL33, JAL34, JAL35, GLL22 and GLL23.</text>
</comment>
<comment type="disruption phenotype">
    <text evidence="4">Smaller PYK10 complexes.</text>
</comment>
<comment type="similarity">
    <text evidence="2 6">Belongs to the jacalin lectin family.</text>
</comment>
<feature type="initiator methionine" description="Removed" evidence="1">
    <location>
        <position position="1"/>
    </location>
</feature>
<feature type="chain" id="PRO_0000430391" description="PYK10-binding protein 2">
    <location>
        <begin position="2"/>
        <end position="296"/>
    </location>
</feature>
<feature type="domain" description="Jacalin-type lectin 1" evidence="2">
    <location>
        <begin position="2"/>
        <end position="142"/>
    </location>
</feature>
<feature type="domain" description="Jacalin-type lectin 2" evidence="2">
    <location>
        <begin position="150"/>
        <end position="293"/>
    </location>
</feature>
<feature type="region of interest" description="Disordered" evidence="3">
    <location>
        <begin position="1"/>
        <end position="20"/>
    </location>
</feature>
<feature type="modified residue" description="N-acetylalanine" evidence="1">
    <location>
        <position position="2"/>
    </location>
</feature>
<reference key="1">
    <citation type="journal article" date="2000" name="DNA Res.">
        <title>Structural analysis of Arabidopsis thaliana chromosome 3. II. Sequence features of the 4,251,695 bp regions covered by 90 P1, TAC and BAC clones.</title>
        <authorList>
            <person name="Kaneko T."/>
            <person name="Katoh T."/>
            <person name="Sato S."/>
            <person name="Nakamura Y."/>
            <person name="Asamizu E."/>
            <person name="Tabata S."/>
        </authorList>
    </citation>
    <scope>NUCLEOTIDE SEQUENCE [LARGE SCALE GENOMIC DNA]</scope>
    <source>
        <strain>cv. Columbia</strain>
    </source>
</reference>
<reference key="2">
    <citation type="journal article" date="2000" name="Nature">
        <title>Sequence and analysis of chromosome 3 of the plant Arabidopsis thaliana.</title>
        <authorList>
            <person name="Salanoubat M."/>
            <person name="Lemcke K."/>
            <person name="Rieger M."/>
            <person name="Ansorge W."/>
            <person name="Unseld M."/>
            <person name="Fartmann B."/>
            <person name="Valle G."/>
            <person name="Bloecker H."/>
            <person name="Perez-Alonso M."/>
            <person name="Obermaier B."/>
            <person name="Delseny M."/>
            <person name="Boutry M."/>
            <person name="Grivell L.A."/>
            <person name="Mache R."/>
            <person name="Puigdomenech P."/>
            <person name="De Simone V."/>
            <person name="Choisne N."/>
            <person name="Artiguenave F."/>
            <person name="Robert C."/>
            <person name="Brottier P."/>
            <person name="Wincker P."/>
            <person name="Cattolico L."/>
            <person name="Weissenbach J."/>
            <person name="Saurin W."/>
            <person name="Quetier F."/>
            <person name="Schaefer M."/>
            <person name="Mueller-Auer S."/>
            <person name="Gabel C."/>
            <person name="Fuchs M."/>
            <person name="Benes V."/>
            <person name="Wurmbach E."/>
            <person name="Drzonek H."/>
            <person name="Erfle H."/>
            <person name="Jordan N."/>
            <person name="Bangert S."/>
            <person name="Wiedelmann R."/>
            <person name="Kranz H."/>
            <person name="Voss H."/>
            <person name="Holland R."/>
            <person name="Brandt P."/>
            <person name="Nyakatura G."/>
            <person name="Vezzi A."/>
            <person name="D'Angelo M."/>
            <person name="Pallavicini A."/>
            <person name="Toppo S."/>
            <person name="Simionati B."/>
            <person name="Conrad A."/>
            <person name="Hornischer K."/>
            <person name="Kauer G."/>
            <person name="Loehnert T.-H."/>
            <person name="Nordsiek G."/>
            <person name="Reichelt J."/>
            <person name="Scharfe M."/>
            <person name="Schoen O."/>
            <person name="Bargues M."/>
            <person name="Terol J."/>
            <person name="Climent J."/>
            <person name="Navarro P."/>
            <person name="Collado C."/>
            <person name="Perez-Perez A."/>
            <person name="Ottenwaelder B."/>
            <person name="Duchemin D."/>
            <person name="Cooke R."/>
            <person name="Laudie M."/>
            <person name="Berger-Llauro C."/>
            <person name="Purnelle B."/>
            <person name="Masuy D."/>
            <person name="de Haan M."/>
            <person name="Maarse A.C."/>
            <person name="Alcaraz J.-P."/>
            <person name="Cottet A."/>
            <person name="Casacuberta E."/>
            <person name="Monfort A."/>
            <person name="Argiriou A."/>
            <person name="Flores M."/>
            <person name="Liguori R."/>
            <person name="Vitale D."/>
            <person name="Mannhaupt G."/>
            <person name="Haase D."/>
            <person name="Schoof H."/>
            <person name="Rudd S."/>
            <person name="Zaccaria P."/>
            <person name="Mewes H.-W."/>
            <person name="Mayer K.F.X."/>
            <person name="Kaul S."/>
            <person name="Town C.D."/>
            <person name="Koo H.L."/>
            <person name="Tallon L.J."/>
            <person name="Jenkins J."/>
            <person name="Rooney T."/>
            <person name="Rizzo M."/>
            <person name="Walts A."/>
            <person name="Utterback T."/>
            <person name="Fujii C.Y."/>
            <person name="Shea T.P."/>
            <person name="Creasy T.H."/>
            <person name="Haas B."/>
            <person name="Maiti R."/>
            <person name="Wu D."/>
            <person name="Peterson J."/>
            <person name="Van Aken S."/>
            <person name="Pai G."/>
            <person name="Militscher J."/>
            <person name="Sellers P."/>
            <person name="Gill J.E."/>
            <person name="Feldblyum T.V."/>
            <person name="Preuss D."/>
            <person name="Lin X."/>
            <person name="Nierman W.C."/>
            <person name="Salzberg S.L."/>
            <person name="White O."/>
            <person name="Venter J.C."/>
            <person name="Fraser C.M."/>
            <person name="Kaneko T."/>
            <person name="Nakamura Y."/>
            <person name="Sato S."/>
            <person name="Kato T."/>
            <person name="Asamizu E."/>
            <person name="Sasamoto S."/>
            <person name="Kimura T."/>
            <person name="Idesawa K."/>
            <person name="Kawashima K."/>
            <person name="Kishida Y."/>
            <person name="Kiyokawa C."/>
            <person name="Kohara M."/>
            <person name="Matsumoto M."/>
            <person name="Matsuno A."/>
            <person name="Muraki A."/>
            <person name="Nakayama S."/>
            <person name="Nakazaki N."/>
            <person name="Shinpo S."/>
            <person name="Takeuchi C."/>
            <person name="Wada T."/>
            <person name="Watanabe A."/>
            <person name="Yamada M."/>
            <person name="Yasuda M."/>
            <person name="Tabata S."/>
        </authorList>
    </citation>
    <scope>NUCLEOTIDE SEQUENCE [LARGE SCALE GENOMIC DNA]</scope>
    <source>
        <strain>cv. Columbia</strain>
    </source>
</reference>
<reference key="3">
    <citation type="journal article" date="2017" name="Plant J.">
        <title>Araport11: a complete reannotation of the Arabidopsis thaliana reference genome.</title>
        <authorList>
            <person name="Cheng C.Y."/>
            <person name="Krishnakumar V."/>
            <person name="Chan A.P."/>
            <person name="Thibaud-Nissen F."/>
            <person name="Schobel S."/>
            <person name="Town C.D."/>
        </authorList>
    </citation>
    <scope>GENOME REANNOTATION</scope>
    <source>
        <strain>cv. Columbia</strain>
    </source>
</reference>
<reference key="4">
    <citation type="submission" date="2002-03" db="EMBL/GenBank/DDBJ databases">
        <title>Full-length cDNA from Arabidopsis thaliana.</title>
        <authorList>
            <person name="Brover V.V."/>
            <person name="Troukhan M.E."/>
            <person name="Alexandrov N.A."/>
            <person name="Lu Y.-P."/>
            <person name="Flavell R.B."/>
            <person name="Feldmann K.A."/>
        </authorList>
    </citation>
    <scope>NUCLEOTIDE SEQUENCE [LARGE SCALE MRNA]</scope>
</reference>
<reference key="5">
    <citation type="journal article" date="2003" name="Science">
        <title>Empirical analysis of transcriptional activity in the Arabidopsis genome.</title>
        <authorList>
            <person name="Yamada K."/>
            <person name="Lim J."/>
            <person name="Dale J.M."/>
            <person name="Chen H."/>
            <person name="Shinn P."/>
            <person name="Palm C.J."/>
            <person name="Southwick A.M."/>
            <person name="Wu H.C."/>
            <person name="Kim C.J."/>
            <person name="Nguyen M."/>
            <person name="Pham P.K."/>
            <person name="Cheuk R.F."/>
            <person name="Karlin-Newmann G."/>
            <person name="Liu S.X."/>
            <person name="Lam B."/>
            <person name="Sakano H."/>
            <person name="Wu T."/>
            <person name="Yu G."/>
            <person name="Miranda M."/>
            <person name="Quach H.L."/>
            <person name="Tripp M."/>
            <person name="Chang C.H."/>
            <person name="Lee J.M."/>
            <person name="Toriumi M.J."/>
            <person name="Chan M.M."/>
            <person name="Tang C.C."/>
            <person name="Onodera C.S."/>
            <person name="Deng J.M."/>
            <person name="Akiyama K."/>
            <person name="Ansari Y."/>
            <person name="Arakawa T."/>
            <person name="Banh J."/>
            <person name="Banno F."/>
            <person name="Bowser L."/>
            <person name="Brooks S.Y."/>
            <person name="Carninci P."/>
            <person name="Chao Q."/>
            <person name="Choy N."/>
            <person name="Enju A."/>
            <person name="Goldsmith A.D."/>
            <person name="Gurjal M."/>
            <person name="Hansen N.F."/>
            <person name="Hayashizaki Y."/>
            <person name="Johnson-Hopson C."/>
            <person name="Hsuan V.W."/>
            <person name="Iida K."/>
            <person name="Karnes M."/>
            <person name="Khan S."/>
            <person name="Koesema E."/>
            <person name="Ishida J."/>
            <person name="Jiang P.X."/>
            <person name="Jones T."/>
            <person name="Kawai J."/>
            <person name="Kamiya A."/>
            <person name="Meyers C."/>
            <person name="Nakajima M."/>
            <person name="Narusaka M."/>
            <person name="Seki M."/>
            <person name="Sakurai T."/>
            <person name="Satou M."/>
            <person name="Tamse R."/>
            <person name="Vaysberg M."/>
            <person name="Wallender E.K."/>
            <person name="Wong C."/>
            <person name="Yamamura Y."/>
            <person name="Yuan S."/>
            <person name="Shinozaki K."/>
            <person name="Davis R.W."/>
            <person name="Theologis A."/>
            <person name="Ecker J.R."/>
        </authorList>
    </citation>
    <scope>NUCLEOTIDE SEQUENCE [LARGE SCALE MRNA]</scope>
    <source>
        <strain>cv. Columbia</strain>
    </source>
</reference>
<reference key="6">
    <citation type="journal article" date="2008" name="Plant Cell Physiol.">
        <title>Antagonistic jacalin-related lectins regulate the size of ER body-type beta-glucosidase complexes in Arabidopsis thaliana.</title>
        <authorList>
            <person name="Nagano A.J."/>
            <person name="Fukao Y."/>
            <person name="Fujiwara M."/>
            <person name="Nishimura M."/>
            <person name="Hara-Nishimura I."/>
        </authorList>
    </citation>
    <scope>FUNCTION</scope>
    <scope>IDENTIFICATION IN THE PYK10 COMPLEX</scope>
    <scope>GENE FAMILY</scope>
    <scope>NOMENCLATURE</scope>
    <scope>DISRUPTION PHENOTYPE</scope>
</reference>
<reference key="7">
    <citation type="journal article" date="2010" name="Plant Cell Physiol.">
        <title>Scopolin-hydrolyzing beta-glucosidases in roots of Arabidopsis.</title>
        <authorList>
            <person name="Ahn Y.O."/>
            <person name="Shimizu B."/>
            <person name="Sakata K."/>
            <person name="Gantulga D."/>
            <person name="Zhou C."/>
            <person name="Zhou Z."/>
            <person name="Bevan D.R."/>
            <person name="Esen A."/>
        </authorList>
    </citation>
    <scope>FUNCTION</scope>
</reference>
<sequence length="296" mass="32233">MAQKVEAKGGKGGNQWDDGSDHDAVTKIQVAVGGMGIQYIQFDYVKNGQTEQTPLRGIKGSTIPTDPFVINHPEEHLVSIEIWYKPDGLIQGLRFISNKKTSRFIGYDRGTRSFLQVQDKKIIGFHGSAGDNLNSLGAYFAPLTIPLTPAKPLPALGSDDGTAWDDGAYVGVKKVYVGQAQDGISAVKFVYDKSPEEVTGEEHGKSTLLGFEEFVLDYPSEYIIAVEGTYDKIFGSDGSVITMLRFKTNKQTSPPFGLEAGTAFELKEEGHKIVGFHGRADALLHKIGVHVRPVSN</sequence>
<protein>
    <recommendedName>
        <fullName>PYK10-binding protein 2</fullName>
    </recommendedName>
    <alternativeName>
        <fullName>Jacalin-related lectin 31</fullName>
    </alternativeName>
    <alternativeName>
        <fullName>Jasmonate inducible protein isolog</fullName>
    </alternativeName>
</protein>
<keyword id="KW-0007">Acetylation</keyword>
<keyword id="KW-0430">Lectin</keyword>
<keyword id="KW-1185">Reference proteome</keyword>
<keyword id="KW-0677">Repeat</keyword>
<accession>O04313</accession>
<name>JAL31_ARATH</name>
<gene>
    <name type="primary">PBP2</name>
    <name type="synonym">JAL31</name>
    <name type="synonym">PBPII</name>
    <name type="ordered locus">At3g16430</name>
    <name type="ORF">T02O04.7</name>
</gene>